<name>DNAJ_BACVZ</name>
<reference key="1">
    <citation type="journal article" date="2007" name="Nat. Biotechnol.">
        <title>Comparative analysis of the complete genome sequence of the plant growth-promoting bacterium Bacillus amyloliquefaciens FZB42.</title>
        <authorList>
            <person name="Chen X.H."/>
            <person name="Koumoutsi A."/>
            <person name="Scholz R."/>
            <person name="Eisenreich A."/>
            <person name="Schneider K."/>
            <person name="Heinemeyer I."/>
            <person name="Morgenstern B."/>
            <person name="Voss B."/>
            <person name="Hess W.R."/>
            <person name="Reva O."/>
            <person name="Junge H."/>
            <person name="Voigt B."/>
            <person name="Jungblut P.R."/>
            <person name="Vater J."/>
            <person name="Suessmuth R."/>
            <person name="Liesegang H."/>
            <person name="Strittmatter A."/>
            <person name="Gottschalk G."/>
            <person name="Borriss R."/>
        </authorList>
    </citation>
    <scope>NUCLEOTIDE SEQUENCE [LARGE SCALE GENOMIC DNA]</scope>
    <source>
        <strain>DSM 23117 / BGSC 10A6 / LMG 26770 / FZB42</strain>
    </source>
</reference>
<gene>
    <name evidence="1" type="primary">dnaJ</name>
    <name type="ordered locus">RBAM_023760</name>
</gene>
<dbReference type="EMBL" id="CP000560">
    <property type="protein sequence ID" value="ABS74736.1"/>
    <property type="molecule type" value="Genomic_DNA"/>
</dbReference>
<dbReference type="RefSeq" id="WP_003152895.1">
    <property type="nucleotide sequence ID" value="NC_009725.2"/>
</dbReference>
<dbReference type="SMR" id="A7Z6W0"/>
<dbReference type="GeneID" id="93081514"/>
<dbReference type="KEGG" id="bay:RBAM_023760"/>
<dbReference type="HOGENOM" id="CLU_017633_0_7_9"/>
<dbReference type="Proteomes" id="UP000001120">
    <property type="component" value="Chromosome"/>
</dbReference>
<dbReference type="GO" id="GO:0005737">
    <property type="term" value="C:cytoplasm"/>
    <property type="evidence" value="ECO:0007669"/>
    <property type="project" value="UniProtKB-SubCell"/>
</dbReference>
<dbReference type="GO" id="GO:0005524">
    <property type="term" value="F:ATP binding"/>
    <property type="evidence" value="ECO:0007669"/>
    <property type="project" value="InterPro"/>
</dbReference>
<dbReference type="GO" id="GO:0031072">
    <property type="term" value="F:heat shock protein binding"/>
    <property type="evidence" value="ECO:0007669"/>
    <property type="project" value="InterPro"/>
</dbReference>
<dbReference type="GO" id="GO:0051082">
    <property type="term" value="F:unfolded protein binding"/>
    <property type="evidence" value="ECO:0007669"/>
    <property type="project" value="UniProtKB-UniRule"/>
</dbReference>
<dbReference type="GO" id="GO:0008270">
    <property type="term" value="F:zinc ion binding"/>
    <property type="evidence" value="ECO:0007669"/>
    <property type="project" value="UniProtKB-UniRule"/>
</dbReference>
<dbReference type="GO" id="GO:0051085">
    <property type="term" value="P:chaperone cofactor-dependent protein refolding"/>
    <property type="evidence" value="ECO:0007669"/>
    <property type="project" value="TreeGrafter"/>
</dbReference>
<dbReference type="GO" id="GO:0006260">
    <property type="term" value="P:DNA replication"/>
    <property type="evidence" value="ECO:0007669"/>
    <property type="project" value="UniProtKB-KW"/>
</dbReference>
<dbReference type="GO" id="GO:0042026">
    <property type="term" value="P:protein refolding"/>
    <property type="evidence" value="ECO:0007669"/>
    <property type="project" value="TreeGrafter"/>
</dbReference>
<dbReference type="GO" id="GO:0009408">
    <property type="term" value="P:response to heat"/>
    <property type="evidence" value="ECO:0007669"/>
    <property type="project" value="InterPro"/>
</dbReference>
<dbReference type="CDD" id="cd06257">
    <property type="entry name" value="DnaJ"/>
    <property type="match status" value="1"/>
</dbReference>
<dbReference type="CDD" id="cd10747">
    <property type="entry name" value="DnaJ_C"/>
    <property type="match status" value="1"/>
</dbReference>
<dbReference type="CDD" id="cd10719">
    <property type="entry name" value="DnaJ_zf"/>
    <property type="match status" value="1"/>
</dbReference>
<dbReference type="FunFam" id="1.10.287.110:FF:000031">
    <property type="entry name" value="Molecular chaperone DnaJ"/>
    <property type="match status" value="1"/>
</dbReference>
<dbReference type="FunFam" id="2.10.230.10:FF:000002">
    <property type="entry name" value="Molecular chaperone DnaJ"/>
    <property type="match status" value="1"/>
</dbReference>
<dbReference type="FunFam" id="2.60.260.20:FF:000004">
    <property type="entry name" value="Molecular chaperone DnaJ"/>
    <property type="match status" value="1"/>
</dbReference>
<dbReference type="Gene3D" id="1.10.287.110">
    <property type="entry name" value="DnaJ domain"/>
    <property type="match status" value="1"/>
</dbReference>
<dbReference type="Gene3D" id="2.10.230.10">
    <property type="entry name" value="Heat shock protein DnaJ, cysteine-rich domain"/>
    <property type="match status" value="1"/>
</dbReference>
<dbReference type="Gene3D" id="2.60.260.20">
    <property type="entry name" value="Urease metallochaperone UreE, N-terminal domain"/>
    <property type="match status" value="2"/>
</dbReference>
<dbReference type="HAMAP" id="MF_01152">
    <property type="entry name" value="DnaJ"/>
    <property type="match status" value="1"/>
</dbReference>
<dbReference type="InterPro" id="IPR012724">
    <property type="entry name" value="DnaJ"/>
</dbReference>
<dbReference type="InterPro" id="IPR002939">
    <property type="entry name" value="DnaJ_C"/>
</dbReference>
<dbReference type="InterPro" id="IPR001623">
    <property type="entry name" value="DnaJ_domain"/>
</dbReference>
<dbReference type="InterPro" id="IPR018253">
    <property type="entry name" value="DnaJ_domain_CS"/>
</dbReference>
<dbReference type="InterPro" id="IPR008971">
    <property type="entry name" value="HSP40/DnaJ_pept-bd"/>
</dbReference>
<dbReference type="InterPro" id="IPR001305">
    <property type="entry name" value="HSP_DnaJ_Cys-rich_dom"/>
</dbReference>
<dbReference type="InterPro" id="IPR036410">
    <property type="entry name" value="HSP_DnaJ_Cys-rich_dom_sf"/>
</dbReference>
<dbReference type="InterPro" id="IPR036869">
    <property type="entry name" value="J_dom_sf"/>
</dbReference>
<dbReference type="NCBIfam" id="TIGR02349">
    <property type="entry name" value="DnaJ_bact"/>
    <property type="match status" value="1"/>
</dbReference>
<dbReference type="NCBIfam" id="NF008035">
    <property type="entry name" value="PRK10767.1"/>
    <property type="match status" value="1"/>
</dbReference>
<dbReference type="NCBIfam" id="NF010869">
    <property type="entry name" value="PRK14276.1"/>
    <property type="match status" value="1"/>
</dbReference>
<dbReference type="NCBIfam" id="NF010873">
    <property type="entry name" value="PRK14280.1"/>
    <property type="match status" value="1"/>
</dbReference>
<dbReference type="PANTHER" id="PTHR43096:SF48">
    <property type="entry name" value="CHAPERONE PROTEIN DNAJ"/>
    <property type="match status" value="1"/>
</dbReference>
<dbReference type="PANTHER" id="PTHR43096">
    <property type="entry name" value="DNAJ HOMOLOG 1, MITOCHONDRIAL-RELATED"/>
    <property type="match status" value="1"/>
</dbReference>
<dbReference type="Pfam" id="PF00226">
    <property type="entry name" value="DnaJ"/>
    <property type="match status" value="1"/>
</dbReference>
<dbReference type="Pfam" id="PF01556">
    <property type="entry name" value="DnaJ_C"/>
    <property type="match status" value="1"/>
</dbReference>
<dbReference type="Pfam" id="PF00684">
    <property type="entry name" value="DnaJ_CXXCXGXG"/>
    <property type="match status" value="1"/>
</dbReference>
<dbReference type="PRINTS" id="PR00625">
    <property type="entry name" value="JDOMAIN"/>
</dbReference>
<dbReference type="SMART" id="SM00271">
    <property type="entry name" value="DnaJ"/>
    <property type="match status" value="1"/>
</dbReference>
<dbReference type="SUPFAM" id="SSF46565">
    <property type="entry name" value="Chaperone J-domain"/>
    <property type="match status" value="1"/>
</dbReference>
<dbReference type="SUPFAM" id="SSF57938">
    <property type="entry name" value="DnaJ/Hsp40 cysteine-rich domain"/>
    <property type="match status" value="1"/>
</dbReference>
<dbReference type="SUPFAM" id="SSF49493">
    <property type="entry name" value="HSP40/DnaJ peptide-binding domain"/>
    <property type="match status" value="2"/>
</dbReference>
<dbReference type="PROSITE" id="PS00636">
    <property type="entry name" value="DNAJ_1"/>
    <property type="match status" value="1"/>
</dbReference>
<dbReference type="PROSITE" id="PS50076">
    <property type="entry name" value="DNAJ_2"/>
    <property type="match status" value="1"/>
</dbReference>
<dbReference type="PROSITE" id="PS51188">
    <property type="entry name" value="ZF_CR"/>
    <property type="match status" value="1"/>
</dbReference>
<accession>A7Z6W0</accession>
<comment type="function">
    <text evidence="1">Participates actively in the response to hyperosmotic and heat shock by preventing the aggregation of stress-denatured proteins and by disaggregating proteins, also in an autonomous, DnaK-independent fashion. Unfolded proteins bind initially to DnaJ; upon interaction with the DnaJ-bound protein, DnaK hydrolyzes its bound ATP, resulting in the formation of a stable complex. GrpE releases ADP from DnaK; ATP binding to DnaK triggers the release of the substrate protein, thus completing the reaction cycle. Several rounds of ATP-dependent interactions between DnaJ, DnaK and GrpE are required for fully efficient folding. Also involved, together with DnaK and GrpE, in the DNA replication of plasmids through activation of initiation proteins.</text>
</comment>
<comment type="cofactor">
    <cofactor evidence="1">
        <name>Zn(2+)</name>
        <dbReference type="ChEBI" id="CHEBI:29105"/>
    </cofactor>
    <text evidence="1">Binds 2 Zn(2+) ions per monomer.</text>
</comment>
<comment type="subunit">
    <text evidence="1">Homodimer.</text>
</comment>
<comment type="subcellular location">
    <subcellularLocation>
        <location evidence="1">Cytoplasm</location>
    </subcellularLocation>
</comment>
<comment type="domain">
    <text evidence="1">The J domain is necessary and sufficient to stimulate DnaK ATPase activity. Zinc center 1 plays an important role in the autonomous, DnaK-independent chaperone activity of DnaJ. Zinc center 2 is essential for interaction with DnaK and for DnaJ activity.</text>
</comment>
<comment type="similarity">
    <text evidence="1">Belongs to the DnaJ family.</text>
</comment>
<protein>
    <recommendedName>
        <fullName evidence="1">Chaperone protein DnaJ</fullName>
    </recommendedName>
</protein>
<evidence type="ECO:0000255" key="1">
    <source>
        <dbReference type="HAMAP-Rule" id="MF_01152"/>
    </source>
</evidence>
<organism>
    <name type="scientific">Bacillus velezensis (strain DSM 23117 / BGSC 10A6 / LMG 26770 / FZB42)</name>
    <name type="common">Bacillus amyloliquefaciens subsp. plantarum</name>
    <dbReference type="NCBI Taxonomy" id="326423"/>
    <lineage>
        <taxon>Bacteria</taxon>
        <taxon>Bacillati</taxon>
        <taxon>Bacillota</taxon>
        <taxon>Bacilli</taxon>
        <taxon>Bacillales</taxon>
        <taxon>Bacillaceae</taxon>
        <taxon>Bacillus</taxon>
        <taxon>Bacillus amyloliquefaciens group</taxon>
    </lineage>
</organism>
<proteinExistence type="inferred from homology"/>
<sequence>MSKRDYYEVLGVSKSASKDEIKKAYRKLSKKYHPDINKESGADEKFKEVKEAYEALSDDQKRAQYDQFGHTDPNQGFGGGFGGGGDFGGFGFDDIFSSIFGGGTRRRDPNAPRQGADLQYTMTLSFEDAAFGKETIIEIPREENCETCKGSGAKPGTKPDTCSHCGGSGQLNVEQNTPFGKVVNRRVCHHCEGTGKIIKNKCSDCGGTGKVKKRKKINVTIPAGVDDGQQLRVPGQGEPGVNGGPAGDLFVVFHVRAHEFFERDGDDIYCEMPLTFAQAALGDEVEVPTLHGKVKLKIPAGTQTGTKFRLRGKGVQNVRGYGQGDQHIVVRVVTPTNLTDKQKDIIREFAEVSGNLPDEQEMSFFDKVKRAFKGE</sequence>
<keyword id="KW-0143">Chaperone</keyword>
<keyword id="KW-0963">Cytoplasm</keyword>
<keyword id="KW-0235">DNA replication</keyword>
<keyword id="KW-0479">Metal-binding</keyword>
<keyword id="KW-0677">Repeat</keyword>
<keyword id="KW-0346">Stress response</keyword>
<keyword id="KW-0862">Zinc</keyword>
<keyword id="KW-0863">Zinc-finger</keyword>
<feature type="chain" id="PRO_1000085145" description="Chaperone protein DnaJ">
    <location>
        <begin position="1"/>
        <end position="375"/>
    </location>
</feature>
<feature type="domain" description="J" evidence="1">
    <location>
        <begin position="5"/>
        <end position="69"/>
    </location>
</feature>
<feature type="repeat" description="CXXCXGXG motif">
    <location>
        <begin position="145"/>
        <end position="152"/>
    </location>
</feature>
<feature type="repeat" description="CXXCXGXG motif">
    <location>
        <begin position="162"/>
        <end position="169"/>
    </location>
</feature>
<feature type="repeat" description="CXXCXGXG motif">
    <location>
        <begin position="188"/>
        <end position="195"/>
    </location>
</feature>
<feature type="repeat" description="CXXCXGXG motif">
    <location>
        <begin position="202"/>
        <end position="209"/>
    </location>
</feature>
<feature type="zinc finger region" description="CR-type" evidence="1">
    <location>
        <begin position="132"/>
        <end position="214"/>
    </location>
</feature>
<feature type="binding site" evidence="1">
    <location>
        <position position="145"/>
    </location>
    <ligand>
        <name>Zn(2+)</name>
        <dbReference type="ChEBI" id="CHEBI:29105"/>
        <label>1</label>
    </ligand>
</feature>
<feature type="binding site" evidence="1">
    <location>
        <position position="148"/>
    </location>
    <ligand>
        <name>Zn(2+)</name>
        <dbReference type="ChEBI" id="CHEBI:29105"/>
        <label>1</label>
    </ligand>
</feature>
<feature type="binding site" evidence="1">
    <location>
        <position position="162"/>
    </location>
    <ligand>
        <name>Zn(2+)</name>
        <dbReference type="ChEBI" id="CHEBI:29105"/>
        <label>2</label>
    </ligand>
</feature>
<feature type="binding site" evidence="1">
    <location>
        <position position="165"/>
    </location>
    <ligand>
        <name>Zn(2+)</name>
        <dbReference type="ChEBI" id="CHEBI:29105"/>
        <label>2</label>
    </ligand>
</feature>
<feature type="binding site" evidence="1">
    <location>
        <position position="188"/>
    </location>
    <ligand>
        <name>Zn(2+)</name>
        <dbReference type="ChEBI" id="CHEBI:29105"/>
        <label>2</label>
    </ligand>
</feature>
<feature type="binding site" evidence="1">
    <location>
        <position position="191"/>
    </location>
    <ligand>
        <name>Zn(2+)</name>
        <dbReference type="ChEBI" id="CHEBI:29105"/>
        <label>2</label>
    </ligand>
</feature>
<feature type="binding site" evidence="1">
    <location>
        <position position="202"/>
    </location>
    <ligand>
        <name>Zn(2+)</name>
        <dbReference type="ChEBI" id="CHEBI:29105"/>
        <label>1</label>
    </ligand>
</feature>
<feature type="binding site" evidence="1">
    <location>
        <position position="205"/>
    </location>
    <ligand>
        <name>Zn(2+)</name>
        <dbReference type="ChEBI" id="CHEBI:29105"/>
        <label>1</label>
    </ligand>
</feature>